<feature type="chain" id="PRO_0000065926" description="Protein VraX">
    <location>
        <begin position="1"/>
        <end position="59"/>
    </location>
</feature>
<gene>
    <name type="primary">vraX</name>
    <name type="ordered locus">SERP0224</name>
</gene>
<sequence length="59" mass="7104">MIIYRRNIENGTPVYEIITKTFKTITIKCDETFNKYEIYQLLSLLENDVDNMPTSYSYR</sequence>
<dbReference type="EMBL" id="CP000029">
    <property type="protein sequence ID" value="AAW53604.1"/>
    <property type="molecule type" value="Genomic_DNA"/>
</dbReference>
<dbReference type="RefSeq" id="WP_002445763.1">
    <property type="nucleotide sequence ID" value="NC_002976.3"/>
</dbReference>
<dbReference type="SMR" id="Q5HRG9"/>
<dbReference type="STRING" id="176279.SERP0224"/>
<dbReference type="KEGG" id="ser:SERP0224"/>
<dbReference type="eggNOG" id="ENOG502ZFSE">
    <property type="taxonomic scope" value="Bacteria"/>
</dbReference>
<dbReference type="HOGENOM" id="CLU_212227_0_0_9"/>
<dbReference type="Proteomes" id="UP000000531">
    <property type="component" value="Chromosome"/>
</dbReference>
<dbReference type="InterPro" id="IPR035374">
    <property type="entry name" value="VraX"/>
</dbReference>
<dbReference type="Pfam" id="PF17412">
    <property type="entry name" value="VraX"/>
    <property type="match status" value="1"/>
</dbReference>
<reference key="1">
    <citation type="journal article" date="2005" name="J. Bacteriol.">
        <title>Insights on evolution of virulence and resistance from the complete genome analysis of an early methicillin-resistant Staphylococcus aureus strain and a biofilm-producing methicillin-resistant Staphylococcus epidermidis strain.</title>
        <authorList>
            <person name="Gill S.R."/>
            <person name="Fouts D.E."/>
            <person name="Archer G.L."/>
            <person name="Mongodin E.F."/>
            <person name="DeBoy R.T."/>
            <person name="Ravel J."/>
            <person name="Paulsen I.T."/>
            <person name="Kolonay J.F."/>
            <person name="Brinkac L.M."/>
            <person name="Beanan M.J."/>
            <person name="Dodson R.J."/>
            <person name="Daugherty S.C."/>
            <person name="Madupu R."/>
            <person name="Angiuoli S.V."/>
            <person name="Durkin A.S."/>
            <person name="Haft D.H."/>
            <person name="Vamathevan J.J."/>
            <person name="Khouri H."/>
            <person name="Utterback T.R."/>
            <person name="Lee C."/>
            <person name="Dimitrov G."/>
            <person name="Jiang L."/>
            <person name="Qin H."/>
            <person name="Weidman J."/>
            <person name="Tran K."/>
            <person name="Kang K.H."/>
            <person name="Hance I.R."/>
            <person name="Nelson K.E."/>
            <person name="Fraser C.M."/>
        </authorList>
    </citation>
    <scope>NUCLEOTIDE SEQUENCE [LARGE SCALE GENOMIC DNA]</scope>
    <source>
        <strain>ATCC 35984 / DSM 28319 / BCRC 17069 / CCUG 31568 / BM 3577 / RP62A</strain>
    </source>
</reference>
<proteinExistence type="predicted"/>
<protein>
    <recommendedName>
        <fullName>Protein VraX</fullName>
    </recommendedName>
</protein>
<accession>Q5HRG9</accession>
<name>VRAX_STAEQ</name>
<keyword id="KW-1185">Reference proteome</keyword>
<organism>
    <name type="scientific">Staphylococcus epidermidis (strain ATCC 35984 / DSM 28319 / BCRC 17069 / CCUG 31568 / BM 3577 / RP62A)</name>
    <dbReference type="NCBI Taxonomy" id="176279"/>
    <lineage>
        <taxon>Bacteria</taxon>
        <taxon>Bacillati</taxon>
        <taxon>Bacillota</taxon>
        <taxon>Bacilli</taxon>
        <taxon>Bacillales</taxon>
        <taxon>Staphylococcaceae</taxon>
        <taxon>Staphylococcus</taxon>
    </lineage>
</organism>